<dbReference type="EMBL" id="X53374">
    <property type="protein sequence ID" value="CAA37454.1"/>
    <property type="molecule type" value="mRNA"/>
</dbReference>
<dbReference type="PIR" id="S12245">
    <property type="entry name" value="S12245"/>
</dbReference>
<dbReference type="RefSeq" id="NP_001413457.1">
    <property type="nucleotide sequence ID" value="NM_001426528.1"/>
</dbReference>
<dbReference type="SMR" id="P22184"/>
<dbReference type="EnsemblPlants" id="mRNA:HanXRQr2_Chr16g0732441">
    <property type="protein sequence ID" value="mRNA:HanXRQr2_Chr16g0732441"/>
    <property type="gene ID" value="HanXRQr2_Chr16g0732441"/>
</dbReference>
<dbReference type="GeneID" id="110918061"/>
<dbReference type="Gramene" id="mRNA:HanXRQr2_Chr16g0732441">
    <property type="protein sequence ID" value="mRNA:HanXRQr2_Chr16g0732441"/>
    <property type="gene ID" value="HanXRQr2_Chr16g0732441"/>
</dbReference>
<dbReference type="GO" id="GO:0005576">
    <property type="term" value="C:extracellular region"/>
    <property type="evidence" value="ECO:0007669"/>
    <property type="project" value="UniProtKB-KW"/>
</dbReference>
<dbReference type="GO" id="GO:0071555">
    <property type="term" value="P:cell wall organization"/>
    <property type="evidence" value="ECO:0007669"/>
    <property type="project" value="UniProtKB-KW"/>
</dbReference>
<dbReference type="Gene3D" id="3.30.30.10">
    <property type="entry name" value="Knottin, scorpion toxin-like"/>
    <property type="match status" value="1"/>
</dbReference>
<dbReference type="InterPro" id="IPR036574">
    <property type="entry name" value="Scorpion_toxin-like_sf"/>
</dbReference>
<sequence>MANNSVSYLVLLLLVFVLAISESAPVQYCDRVTNLYHEKCDEKQCTEHCKTNEKAESGYCLVVEKQQLSICSFDCSKYKPSTPAPPPPPPKLFYSGSWLQAKVENVMLPGQKNMNCTQCPK</sequence>
<feature type="signal peptide">
    <location>
        <begin position="1"/>
        <end position="21"/>
    </location>
</feature>
<feature type="chain" id="PRO_0000020758" description="Anther-specific protein SF2">
    <location>
        <begin position="22"/>
        <end position="121"/>
    </location>
</feature>
<feature type="glycosylation site" description="N-linked (GlcNAc...) asparagine" evidence="1">
    <location>
        <position position="115"/>
    </location>
</feature>
<organism>
    <name type="scientific">Helianthus annuus</name>
    <name type="common">Common sunflower</name>
    <dbReference type="NCBI Taxonomy" id="4232"/>
    <lineage>
        <taxon>Eukaryota</taxon>
        <taxon>Viridiplantae</taxon>
        <taxon>Streptophyta</taxon>
        <taxon>Embryophyta</taxon>
        <taxon>Tracheophyta</taxon>
        <taxon>Spermatophyta</taxon>
        <taxon>Magnoliopsida</taxon>
        <taxon>eudicotyledons</taxon>
        <taxon>Gunneridae</taxon>
        <taxon>Pentapetalae</taxon>
        <taxon>asterids</taxon>
        <taxon>campanulids</taxon>
        <taxon>Asterales</taxon>
        <taxon>Asteraceae</taxon>
        <taxon>Asteroideae</taxon>
        <taxon>Heliantheae alliance</taxon>
        <taxon>Heliantheae</taxon>
        <taxon>Helianthus</taxon>
    </lineage>
</organism>
<protein>
    <recommendedName>
        <fullName>Anther-specific protein SF2</fullName>
    </recommendedName>
</protein>
<reference key="1">
    <citation type="journal article" date="1990" name="Plant Mol. Biol.">
        <title>Nucleotide sequence of two anther-specific cDNAs from sunflower (Helianthus annuus L.).</title>
        <authorList>
            <person name="Domon C."/>
            <person name="Evrard J.-L."/>
            <person name="Herdenberger F."/>
            <person name="Pillay D.T.N."/>
            <person name="Steinmetz A."/>
        </authorList>
    </citation>
    <scope>NUCLEOTIDE SEQUENCE [MRNA]</scope>
    <source>
        <strain>cv. HA401B / Cargill</strain>
        <tissue>Anther</tissue>
    </source>
</reference>
<reference key="2">
    <citation type="journal article" date="1991" name="Plant Mol. Biol.">
        <title>Anther-specific, developmentally regulated expression of genes encoding a new class of proline-rich proteins in sunflower.</title>
        <authorList>
            <person name="Evrard J.-L."/>
            <person name="Jako C."/>
            <person name="Saint-Guily A."/>
            <person name="Weil J.H."/>
            <person name="Kuntz M."/>
        </authorList>
    </citation>
    <scope>NUCLEOTIDE SEQUENCE [MRNA]</scope>
</reference>
<keyword id="KW-0134">Cell wall</keyword>
<keyword id="KW-0961">Cell wall biogenesis/degradation</keyword>
<keyword id="KW-0325">Glycoprotein</keyword>
<keyword id="KW-0964">Secreted</keyword>
<keyword id="KW-0732">Signal</keyword>
<name>ASF2_HELAN</name>
<comment type="function">
    <text>Anther-specific cell wall protein which could contribute to the cell wall architecture of epidermal anther cells via intermolecular disulfide bridges.</text>
</comment>
<comment type="subcellular location">
    <subcellularLocation>
        <location>Secreted</location>
        <location>Cell wall</location>
    </subcellularLocation>
</comment>
<comment type="tissue specificity">
    <text>Epidermal anther cells.</text>
</comment>
<comment type="developmental stage">
    <text>Late developmental stages.</text>
</comment>
<evidence type="ECO:0000255" key="1"/>
<proteinExistence type="evidence at transcript level"/>
<accession>P22184</accession>